<sequence>MLNEFKTFISKGNVMDMAVGIIIGAAFTAIVSSLVADLVNPFIALFTGGIDFSGWFYALDGETYASLAAATDAGAPVFAFGNFIMAVINFLIIAFVVFMLVKTVNRIKDAAEGEKEAVAEEPAGPTELDILKEIRDALAKQG</sequence>
<evidence type="ECO:0000255" key="1">
    <source>
        <dbReference type="HAMAP-Rule" id="MF_00115"/>
    </source>
</evidence>
<comment type="function">
    <text evidence="1">Channel that opens in response to stretch forces in the membrane lipid bilayer. May participate in the regulation of osmotic pressure changes within the cell.</text>
</comment>
<comment type="subunit">
    <text evidence="1">Homopentamer.</text>
</comment>
<comment type="subcellular location">
    <subcellularLocation>
        <location evidence="1">Cell inner membrane</location>
        <topology evidence="1">Multi-pass membrane protein</topology>
    </subcellularLocation>
</comment>
<comment type="similarity">
    <text evidence="1">Belongs to the MscL family.</text>
</comment>
<gene>
    <name evidence="1" type="primary">mscL</name>
    <name type="ordered locus">RD1_1015</name>
</gene>
<proteinExistence type="inferred from homology"/>
<feature type="chain" id="PRO_1000015421" description="Large-conductance mechanosensitive channel">
    <location>
        <begin position="1"/>
        <end position="142"/>
    </location>
</feature>
<feature type="transmembrane region" description="Helical" evidence="1">
    <location>
        <begin position="19"/>
        <end position="39"/>
    </location>
</feature>
<feature type="transmembrane region" description="Helical" evidence="1">
    <location>
        <begin position="41"/>
        <end position="61"/>
    </location>
</feature>
<feature type="transmembrane region" description="Helical" evidence="1">
    <location>
        <begin position="78"/>
        <end position="98"/>
    </location>
</feature>
<accession>Q16BG3</accession>
<name>MSCL_ROSDO</name>
<dbReference type="EMBL" id="CP000362">
    <property type="protein sequence ID" value="ABG30680.1"/>
    <property type="molecule type" value="Genomic_DNA"/>
</dbReference>
<dbReference type="RefSeq" id="WP_011567302.1">
    <property type="nucleotide sequence ID" value="NC_008209.1"/>
</dbReference>
<dbReference type="SMR" id="Q16BG3"/>
<dbReference type="STRING" id="375451.RD1_1015"/>
<dbReference type="KEGG" id="rde:RD1_1015"/>
<dbReference type="eggNOG" id="COG1970">
    <property type="taxonomic scope" value="Bacteria"/>
</dbReference>
<dbReference type="HOGENOM" id="CLU_095787_0_1_5"/>
<dbReference type="OrthoDB" id="9810350at2"/>
<dbReference type="Proteomes" id="UP000007029">
    <property type="component" value="Chromosome"/>
</dbReference>
<dbReference type="GO" id="GO:0005886">
    <property type="term" value="C:plasma membrane"/>
    <property type="evidence" value="ECO:0007669"/>
    <property type="project" value="UniProtKB-SubCell"/>
</dbReference>
<dbReference type="GO" id="GO:0008381">
    <property type="term" value="F:mechanosensitive monoatomic ion channel activity"/>
    <property type="evidence" value="ECO:0007669"/>
    <property type="project" value="UniProtKB-UniRule"/>
</dbReference>
<dbReference type="Gene3D" id="1.10.1200.120">
    <property type="entry name" value="Large-conductance mechanosensitive channel, MscL, domain 1"/>
    <property type="match status" value="1"/>
</dbReference>
<dbReference type="HAMAP" id="MF_00115">
    <property type="entry name" value="MscL"/>
    <property type="match status" value="1"/>
</dbReference>
<dbReference type="InterPro" id="IPR019823">
    <property type="entry name" value="Mechanosensitive_channel_CS"/>
</dbReference>
<dbReference type="InterPro" id="IPR001185">
    <property type="entry name" value="MS_channel"/>
</dbReference>
<dbReference type="InterPro" id="IPR037673">
    <property type="entry name" value="MSC/AndL"/>
</dbReference>
<dbReference type="InterPro" id="IPR036019">
    <property type="entry name" value="MscL_channel"/>
</dbReference>
<dbReference type="NCBIfam" id="TIGR00220">
    <property type="entry name" value="mscL"/>
    <property type="match status" value="1"/>
</dbReference>
<dbReference type="NCBIfam" id="NF010557">
    <property type="entry name" value="PRK13952.1"/>
    <property type="match status" value="1"/>
</dbReference>
<dbReference type="PANTHER" id="PTHR30266:SF2">
    <property type="entry name" value="LARGE-CONDUCTANCE MECHANOSENSITIVE CHANNEL"/>
    <property type="match status" value="1"/>
</dbReference>
<dbReference type="PANTHER" id="PTHR30266">
    <property type="entry name" value="MECHANOSENSITIVE CHANNEL MSCL"/>
    <property type="match status" value="1"/>
</dbReference>
<dbReference type="Pfam" id="PF01741">
    <property type="entry name" value="MscL"/>
    <property type="match status" value="1"/>
</dbReference>
<dbReference type="PRINTS" id="PR01264">
    <property type="entry name" value="MECHCHANNEL"/>
</dbReference>
<dbReference type="SUPFAM" id="SSF81330">
    <property type="entry name" value="Gated mechanosensitive channel"/>
    <property type="match status" value="1"/>
</dbReference>
<dbReference type="PROSITE" id="PS01327">
    <property type="entry name" value="MSCL"/>
    <property type="match status" value="1"/>
</dbReference>
<keyword id="KW-0997">Cell inner membrane</keyword>
<keyword id="KW-1003">Cell membrane</keyword>
<keyword id="KW-0407">Ion channel</keyword>
<keyword id="KW-0406">Ion transport</keyword>
<keyword id="KW-0472">Membrane</keyword>
<keyword id="KW-1185">Reference proteome</keyword>
<keyword id="KW-0812">Transmembrane</keyword>
<keyword id="KW-1133">Transmembrane helix</keyword>
<keyword id="KW-0813">Transport</keyword>
<reference key="1">
    <citation type="journal article" date="2007" name="J. Bacteriol.">
        <title>The complete genome sequence of Roseobacter denitrificans reveals a mixotrophic rather than photosynthetic metabolism.</title>
        <authorList>
            <person name="Swingley W.D."/>
            <person name="Sadekar S."/>
            <person name="Mastrian S.D."/>
            <person name="Matthies H.J."/>
            <person name="Hao J."/>
            <person name="Ramos H."/>
            <person name="Acharya C.R."/>
            <person name="Conrad A.L."/>
            <person name="Taylor H.L."/>
            <person name="Dejesa L.C."/>
            <person name="Shah M.K."/>
            <person name="O'Huallachain M.E."/>
            <person name="Lince M.T."/>
            <person name="Blankenship R.E."/>
            <person name="Beatty J.T."/>
            <person name="Touchman J.W."/>
        </authorList>
    </citation>
    <scope>NUCLEOTIDE SEQUENCE [LARGE SCALE GENOMIC DNA]</scope>
    <source>
        <strain>ATCC 33942 / OCh 114</strain>
    </source>
</reference>
<protein>
    <recommendedName>
        <fullName evidence="1">Large-conductance mechanosensitive channel</fullName>
    </recommendedName>
</protein>
<organism>
    <name type="scientific">Roseobacter denitrificans (strain ATCC 33942 / OCh 114)</name>
    <name type="common">Erythrobacter sp. (strain OCh 114)</name>
    <name type="synonym">Roseobacter denitrificans</name>
    <dbReference type="NCBI Taxonomy" id="375451"/>
    <lineage>
        <taxon>Bacteria</taxon>
        <taxon>Pseudomonadati</taxon>
        <taxon>Pseudomonadota</taxon>
        <taxon>Alphaproteobacteria</taxon>
        <taxon>Rhodobacterales</taxon>
        <taxon>Roseobacteraceae</taxon>
        <taxon>Roseobacter</taxon>
    </lineage>
</organism>